<accession>P08395</accession>
<accession>P77752</accession>
<accession>Q46723</accession>
<accession>Q46724</accession>
<accession>Q46725</accession>
<accession>Q46726</accession>
<accession>Q57183</accession>
<dbReference type="EC" id="3.4.21.-"/>
<dbReference type="EMBL" id="M13359">
    <property type="protein sequence ID" value="AAA24648.1"/>
    <property type="molecule type" value="Genomic_DNA"/>
</dbReference>
<dbReference type="EMBL" id="U00096">
    <property type="protein sequence ID" value="AAC74836.1"/>
    <property type="molecule type" value="Genomic_DNA"/>
</dbReference>
<dbReference type="EMBL" id="AP009048">
    <property type="protein sequence ID" value="BAA15557.1"/>
    <property type="molecule type" value="Genomic_DNA"/>
</dbReference>
<dbReference type="EMBL" id="U13772">
    <property type="protein sequence ID" value="AAA57008.1"/>
    <property type="molecule type" value="Genomic_DNA"/>
</dbReference>
<dbReference type="EMBL" id="U13773">
    <property type="protein sequence ID" value="AAA57009.1"/>
    <property type="molecule type" value="Genomic_DNA"/>
</dbReference>
<dbReference type="EMBL" id="U13774">
    <property type="protein sequence ID" value="AAA57010.1"/>
    <property type="molecule type" value="Genomic_DNA"/>
</dbReference>
<dbReference type="EMBL" id="U13775">
    <property type="protein sequence ID" value="AAA57011.1"/>
    <property type="molecule type" value="Genomic_DNA"/>
</dbReference>
<dbReference type="EMBL" id="U13776">
    <property type="protein sequence ID" value="AAA57012.1"/>
    <property type="molecule type" value="Genomic_DNA"/>
</dbReference>
<dbReference type="EMBL" id="U13777">
    <property type="protein sequence ID" value="AAA57013.1"/>
    <property type="molecule type" value="Genomic_DNA"/>
</dbReference>
<dbReference type="EMBL" id="U13778">
    <property type="protein sequence ID" value="AAA57014.1"/>
    <property type="molecule type" value="Genomic_DNA"/>
</dbReference>
<dbReference type="EMBL" id="U13779">
    <property type="protein sequence ID" value="AAA57015.1"/>
    <property type="molecule type" value="Genomic_DNA"/>
</dbReference>
<dbReference type="EMBL" id="U13780">
    <property type="protein sequence ID" value="AAA57016.1"/>
    <property type="molecule type" value="Genomic_DNA"/>
</dbReference>
<dbReference type="EMBL" id="U13782">
    <property type="protein sequence ID" value="AAA57017.1"/>
    <property type="molecule type" value="Genomic_DNA"/>
</dbReference>
<dbReference type="EMBL" id="U13833">
    <property type="protein sequence ID" value="AAA57030.1"/>
    <property type="molecule type" value="Genomic_DNA"/>
</dbReference>
<dbReference type="EMBL" id="U13834">
    <property type="protein sequence ID" value="AAA57031.1"/>
    <property type="molecule type" value="Genomic_DNA"/>
</dbReference>
<dbReference type="PIR" id="F64936">
    <property type="entry name" value="PRECT4"/>
</dbReference>
<dbReference type="PIR" id="I81191">
    <property type="entry name" value="I81191"/>
</dbReference>
<dbReference type="RefSeq" id="NP_416280.1">
    <property type="nucleotide sequence ID" value="NC_000913.3"/>
</dbReference>
<dbReference type="RefSeq" id="WP_001259810.1">
    <property type="nucleotide sequence ID" value="NZ_SSZK01000001.1"/>
</dbReference>
<dbReference type="PDB" id="3BEZ">
    <property type="method" value="X-ray"/>
    <property type="resolution" value="2.76 A"/>
    <property type="chains" value="A/B/C/D=47-618"/>
</dbReference>
<dbReference type="PDB" id="3BF0">
    <property type="method" value="X-ray"/>
    <property type="resolution" value="2.55 A"/>
    <property type="chains" value="A/B/C/D=47-618"/>
</dbReference>
<dbReference type="PDBsum" id="3BEZ"/>
<dbReference type="PDBsum" id="3BF0"/>
<dbReference type="SMR" id="P08395"/>
<dbReference type="BioGRID" id="4259140">
    <property type="interactions" value="24"/>
</dbReference>
<dbReference type="FunCoup" id="P08395">
    <property type="interactions" value="300"/>
</dbReference>
<dbReference type="IntAct" id="P08395">
    <property type="interactions" value="1"/>
</dbReference>
<dbReference type="STRING" id="511145.b1766"/>
<dbReference type="MEROPS" id="S49.001"/>
<dbReference type="jPOST" id="P08395"/>
<dbReference type="PaxDb" id="511145-b1766"/>
<dbReference type="EnsemblBacteria" id="AAC74836">
    <property type="protein sequence ID" value="AAC74836"/>
    <property type="gene ID" value="b1766"/>
</dbReference>
<dbReference type="GeneID" id="946281"/>
<dbReference type="KEGG" id="ecj:JW1755"/>
<dbReference type="KEGG" id="eco:b1766"/>
<dbReference type="KEGG" id="ecoc:C3026_10085"/>
<dbReference type="PATRIC" id="fig|1411691.4.peg.488"/>
<dbReference type="EchoBASE" id="EB0961"/>
<dbReference type="eggNOG" id="COG0616">
    <property type="taxonomic scope" value="Bacteria"/>
</dbReference>
<dbReference type="HOGENOM" id="CLU_008856_1_1_6"/>
<dbReference type="InParanoid" id="P08395"/>
<dbReference type="OMA" id="KGQYLYC"/>
<dbReference type="OrthoDB" id="9764363at2"/>
<dbReference type="PhylomeDB" id="P08395"/>
<dbReference type="BioCyc" id="EcoCyc:EG10968-MONOMER"/>
<dbReference type="BioCyc" id="MetaCyc:EG10968-MONOMER"/>
<dbReference type="EvolutionaryTrace" id="P08395"/>
<dbReference type="PRO" id="PR:P08395"/>
<dbReference type="Proteomes" id="UP000000625">
    <property type="component" value="Chromosome"/>
</dbReference>
<dbReference type="GO" id="GO:0016020">
    <property type="term" value="C:membrane"/>
    <property type="evidence" value="ECO:0007005"/>
    <property type="project" value="UniProtKB"/>
</dbReference>
<dbReference type="GO" id="GO:0005886">
    <property type="term" value="C:plasma membrane"/>
    <property type="evidence" value="ECO:0000314"/>
    <property type="project" value="EcoCyc"/>
</dbReference>
<dbReference type="GO" id="GO:0004175">
    <property type="term" value="F:endopeptidase activity"/>
    <property type="evidence" value="ECO:0000314"/>
    <property type="project" value="EcoCyc"/>
</dbReference>
<dbReference type="GO" id="GO:0008236">
    <property type="term" value="F:serine-type peptidase activity"/>
    <property type="evidence" value="ECO:0007669"/>
    <property type="project" value="UniProtKB-KW"/>
</dbReference>
<dbReference type="GO" id="GO:0006465">
    <property type="term" value="P:signal peptide processing"/>
    <property type="evidence" value="ECO:0000315"/>
    <property type="project" value="EcoliWiki"/>
</dbReference>
<dbReference type="CDD" id="cd07019">
    <property type="entry name" value="S49_SppA_1"/>
    <property type="match status" value="1"/>
</dbReference>
<dbReference type="CDD" id="cd07018">
    <property type="entry name" value="S49_SppA_67K_type"/>
    <property type="match status" value="1"/>
</dbReference>
<dbReference type="FunFam" id="3.90.226.10:FF:000033">
    <property type="entry name" value="Protease 4"/>
    <property type="match status" value="1"/>
</dbReference>
<dbReference type="FunFam" id="3.90.226.10:FF:000051">
    <property type="entry name" value="Protease 4"/>
    <property type="match status" value="1"/>
</dbReference>
<dbReference type="Gene3D" id="6.20.330.10">
    <property type="match status" value="1"/>
</dbReference>
<dbReference type="Gene3D" id="3.90.226.10">
    <property type="entry name" value="2-enoyl-CoA Hydratase, Chain A, domain 1"/>
    <property type="match status" value="3"/>
</dbReference>
<dbReference type="InterPro" id="IPR029045">
    <property type="entry name" value="ClpP/crotonase-like_dom_sf"/>
</dbReference>
<dbReference type="InterPro" id="IPR004634">
    <property type="entry name" value="Pept_S49_pIV"/>
</dbReference>
<dbReference type="InterPro" id="IPR004635">
    <property type="entry name" value="Pept_S49_SppA"/>
</dbReference>
<dbReference type="InterPro" id="IPR002142">
    <property type="entry name" value="Peptidase_S49"/>
</dbReference>
<dbReference type="InterPro" id="IPR033854">
    <property type="entry name" value="S49_SppA_1"/>
</dbReference>
<dbReference type="InterPro" id="IPR047217">
    <property type="entry name" value="S49_SppA_67K_type_N"/>
</dbReference>
<dbReference type="NCBIfam" id="NF008195">
    <property type="entry name" value="PRK10949.1"/>
    <property type="match status" value="1"/>
</dbReference>
<dbReference type="NCBIfam" id="TIGR00705">
    <property type="entry name" value="SppA_67K"/>
    <property type="match status" value="1"/>
</dbReference>
<dbReference type="NCBIfam" id="TIGR00706">
    <property type="entry name" value="SppA_dom"/>
    <property type="match status" value="1"/>
</dbReference>
<dbReference type="PANTHER" id="PTHR33209:SF1">
    <property type="entry name" value="PEPTIDASE S49 DOMAIN-CONTAINING PROTEIN"/>
    <property type="match status" value="1"/>
</dbReference>
<dbReference type="PANTHER" id="PTHR33209">
    <property type="entry name" value="PROTEASE 4"/>
    <property type="match status" value="1"/>
</dbReference>
<dbReference type="Pfam" id="PF01343">
    <property type="entry name" value="Peptidase_S49"/>
    <property type="match status" value="2"/>
</dbReference>
<dbReference type="PIRSF" id="PIRSF001217">
    <property type="entry name" value="Protease_4_SppA"/>
    <property type="match status" value="1"/>
</dbReference>
<dbReference type="SUPFAM" id="SSF52096">
    <property type="entry name" value="ClpP/crotonase"/>
    <property type="match status" value="2"/>
</dbReference>
<comment type="function">
    <text evidence="1 2 3 4">Digests cleaved signal peptides in vitro, its in vivo function is unknown. This activity is necessary to maintain proper secretion of mature proteins across the membrane.</text>
</comment>
<comment type="activity regulation">
    <text evidence="4">Inhibited by serine hydrolase inhibitor FP-biotin and by antipain.</text>
</comment>
<comment type="subunit">
    <text evidence="1 4">Homotetramer.</text>
</comment>
<comment type="subcellular location">
    <subcellularLocation>
        <location evidence="2 4">Cell inner membrane</location>
        <topology evidence="2 4">Single-pass membrane protein</topology>
    </subcellularLocation>
</comment>
<comment type="domain">
    <text>A tandem duplication in the protein fold creates an intact active site between the repeated domains of each monomer.</text>
</comment>
<comment type="disruption phenotype">
    <text evidence="3">No effect on processing of liberated signal peptides in vivo.</text>
</comment>
<comment type="similarity">
    <text evidence="5">Belongs to the peptidase S49 family.</text>
</comment>
<gene>
    <name type="primary">sppA</name>
    <name type="ordered locus">b1766</name>
    <name type="ordered locus">JW1755</name>
</gene>
<reference key="1">
    <citation type="journal article" date="1986" name="J. Biol. Chem.">
        <title>Molecular cloning and sequencing of the sppA gene and characterization of the encoded protease IV, a signal peptide peptidase, of Escherichia coli.</title>
        <authorList>
            <person name="Ichihara S."/>
            <person name="Suzuki T."/>
            <person name="Suzuki M."/>
            <person name="Mizushima S."/>
        </authorList>
    </citation>
    <scope>NUCLEOTIDE SEQUENCE [GENOMIC DNA]</scope>
    <scope>FUNCTION</scope>
    <scope>ACTIVITY REGULATION</scope>
    <scope>SUBUNIT</scope>
    <scope>SUBCELLULAR LOCATION</scope>
    <source>
        <strain>K12 / CS520</strain>
    </source>
</reference>
<reference key="2">
    <citation type="journal article" date="1996" name="DNA Res.">
        <title>A 570-kb DNA sequence of the Escherichia coli K-12 genome corresponding to the 28.0-40.1 min region on the linkage map.</title>
        <authorList>
            <person name="Aiba H."/>
            <person name="Baba T."/>
            <person name="Fujita K."/>
            <person name="Hayashi K."/>
            <person name="Inada T."/>
            <person name="Isono K."/>
            <person name="Itoh T."/>
            <person name="Kasai H."/>
            <person name="Kashimoto K."/>
            <person name="Kimura S."/>
            <person name="Kitakawa M."/>
            <person name="Kitagawa M."/>
            <person name="Makino K."/>
            <person name="Miki T."/>
            <person name="Mizobuchi K."/>
            <person name="Mori H."/>
            <person name="Mori T."/>
            <person name="Motomura K."/>
            <person name="Nakade S."/>
            <person name="Nakamura Y."/>
            <person name="Nashimoto H."/>
            <person name="Nishio Y."/>
            <person name="Oshima T."/>
            <person name="Saito N."/>
            <person name="Sampei G."/>
            <person name="Seki Y."/>
            <person name="Sivasundaram S."/>
            <person name="Tagami H."/>
            <person name="Takeda J."/>
            <person name="Takemoto K."/>
            <person name="Takeuchi Y."/>
            <person name="Wada C."/>
            <person name="Yamamoto Y."/>
            <person name="Horiuchi T."/>
        </authorList>
    </citation>
    <scope>NUCLEOTIDE SEQUENCE [LARGE SCALE GENOMIC DNA]</scope>
    <source>
        <strain>K12 / W3110 / ATCC 27325 / DSM 5911</strain>
    </source>
</reference>
<reference key="3">
    <citation type="journal article" date="1997" name="Science">
        <title>The complete genome sequence of Escherichia coli K-12.</title>
        <authorList>
            <person name="Blattner F.R."/>
            <person name="Plunkett G. III"/>
            <person name="Bloch C.A."/>
            <person name="Perna N.T."/>
            <person name="Burland V."/>
            <person name="Riley M."/>
            <person name="Collado-Vides J."/>
            <person name="Glasner J.D."/>
            <person name="Rode C.K."/>
            <person name="Mayhew G.F."/>
            <person name="Gregor J."/>
            <person name="Davis N.W."/>
            <person name="Kirkpatrick H.A."/>
            <person name="Goeden M.A."/>
            <person name="Rose D.J."/>
            <person name="Mau B."/>
            <person name="Shao Y."/>
        </authorList>
    </citation>
    <scope>NUCLEOTIDE SEQUENCE [LARGE SCALE GENOMIC DNA]</scope>
    <source>
        <strain>K12 / MG1655 / ATCC 47076</strain>
    </source>
</reference>
<reference key="4">
    <citation type="journal article" date="2006" name="Mol. Syst. Biol.">
        <title>Highly accurate genome sequences of Escherichia coli K-12 strains MG1655 and W3110.</title>
        <authorList>
            <person name="Hayashi K."/>
            <person name="Morooka N."/>
            <person name="Yamamoto Y."/>
            <person name="Fujita K."/>
            <person name="Isono K."/>
            <person name="Choi S."/>
            <person name="Ohtsubo E."/>
            <person name="Baba T."/>
            <person name="Wanner B.L."/>
            <person name="Mori H."/>
            <person name="Horiuchi T."/>
        </authorList>
    </citation>
    <scope>NUCLEOTIDE SEQUENCE [LARGE SCALE GENOMIC DNA]</scope>
    <source>
        <strain>K12 / W3110 / ATCC 27325 / DSM 5911</strain>
    </source>
</reference>
<reference key="5">
    <citation type="journal article" date="1994" name="Science">
        <title>Clonal divergence in Escherichia coli as a result of recombination, not mutation.</title>
        <authorList>
            <person name="Guttman D.S."/>
            <person name="Dykhuizen D.E."/>
        </authorList>
    </citation>
    <scope>NUCLEOTIDE SEQUENCE [GENOMIC DNA] OF 110-433</scope>
    <source>
        <strain>Various ECOR strains</strain>
    </source>
</reference>
<reference key="6">
    <citation type="journal article" date="2008" name="Biochemistry">
        <title>Escherichia coli signal peptide peptidase A is a serine-lysine protease with a lysine recruited to the nonconserved amino-terminal domain in the S49 protease family.</title>
        <authorList>
            <person name="Wang P."/>
            <person name="Shim E."/>
            <person name="Cravatt B."/>
            <person name="Jacobsen R."/>
            <person name="Schoeniger J."/>
            <person name="Kim A.C."/>
            <person name="Paetzel M."/>
            <person name="Dalbey R.E."/>
        </authorList>
    </citation>
    <scope>FUNCTION</scope>
    <scope>SUBCELLULAR LOCATION</scope>
    <scope>ACTIVE SITE</scope>
    <scope>TOPOLOGY</scope>
    <scope>MUTAGENESIS OF LYS-209; LYS-366; SER-409; GLY-410; TYR-412; HIS-510 AND ASP-524</scope>
    <source>
        <strain>K12 / MC1061 / ATCC 53338 / DSM 7140</strain>
    </source>
</reference>
<reference key="7">
    <citation type="journal article" date="2011" name="Proc. Natl. Acad. Sci. U.S.A.">
        <title>Post-liberation cleavage of signal peptides is catalyzed by the site-2 protease (S2P) in bacteria.</title>
        <authorList>
            <person name="Saito A."/>
            <person name="Hizukuri Y."/>
            <person name="Matsuo E."/>
            <person name="Chiba S."/>
            <person name="Mori H."/>
            <person name="Nishimura O."/>
            <person name="Ito K."/>
            <person name="Akiyama Y."/>
        </authorList>
    </citation>
    <scope>FUNCTION</scope>
    <scope>DISRUPTION PHENOTYPE</scope>
    <source>
        <strain>K12</strain>
    </source>
</reference>
<reference key="8">
    <citation type="journal article" date="2008" name="J. Mol. Biol.">
        <title>Crystal structure of a bacterial signal peptide peptidase.</title>
        <authorList>
            <person name="Kim A.C."/>
            <person name="Oliver D.C."/>
            <person name="Paetzel M."/>
        </authorList>
    </citation>
    <scope>X-RAY CRYSTALLOGRAPHY (2.6 ANGSTROMS) OF 47-618</scope>
    <scope>FUNCTION</scope>
    <scope>ACTIVE SITE</scope>
    <scope>TOPOLOGY</scope>
    <scope>SUBUNIT</scope>
    <source>
        <strain>K12</strain>
    </source>
</reference>
<protein>
    <recommendedName>
        <fullName>Protease 4</fullName>
        <ecNumber>3.4.21.-</ecNumber>
    </recommendedName>
    <alternativeName>
        <fullName>Endopeptidase IV</fullName>
    </alternativeName>
    <alternativeName>
        <fullName>Protease IV</fullName>
    </alternativeName>
    <alternativeName>
        <fullName>Signal peptide peptidase</fullName>
    </alternativeName>
</protein>
<name>SPPA_ECOLI</name>
<feature type="chain" id="PRO_0000171438" description="Protease 4">
    <location>
        <begin position="1"/>
        <end position="618"/>
    </location>
</feature>
<feature type="topological domain" description="Cytoplasmic">
    <location>
        <begin position="1"/>
        <end position="24"/>
    </location>
</feature>
<feature type="transmembrane region" description="Helical">
    <location>
        <begin position="25"/>
        <end position="45"/>
    </location>
</feature>
<feature type="topological domain" description="Periplasmic">
    <location>
        <begin position="46"/>
        <end position="618"/>
    </location>
</feature>
<feature type="active site" description="Proton donor/acceptor" evidence="5">
    <location>
        <position position="209"/>
    </location>
</feature>
<feature type="active site" description="Nucleophile">
    <location>
        <position position="409"/>
    </location>
</feature>
<feature type="sequence variant" description="In strain: ECOR 49 and ECOR 50.">
    <original>V</original>
    <variation>I</variation>
    <location>
        <position position="151"/>
    </location>
</feature>
<feature type="sequence variant" description="In strain: ECOR 16.">
    <original>G</original>
    <variation>S</variation>
    <location>
        <position position="186"/>
    </location>
</feature>
<feature type="sequence variant" description="In strain: ECOR 16.">
    <original>E</original>
    <variation>H</variation>
    <location>
        <position position="252"/>
    </location>
</feature>
<feature type="sequence variant" description="In strain: ECOR 49.">
    <original>E</original>
    <variation>K</variation>
    <location>
        <position position="252"/>
    </location>
</feature>
<feature type="sequence variant" description="In strain: ECOR 38, ECOR 39, ECOR 40, ECOR 50, ECOR 65 and ECOR 68.">
    <original>E</original>
    <variation>Q</variation>
    <location>
        <position position="252"/>
    </location>
</feature>
<feature type="sequence variant" description="In strain: ECOR 38, ECOR 39, ECOR 40, ECOR 49, ECOR 50 and ECOR 65.">
    <original>A</original>
    <variation>T</variation>
    <location>
        <position position="294"/>
    </location>
</feature>
<feature type="mutagenesis site" description="Loss of activity." evidence="2">
    <original>K</original>
    <variation>A</variation>
    <location>
        <position position="209"/>
    </location>
</feature>
<feature type="mutagenesis site" description="Reduced activity." evidence="2">
    <original>K</original>
    <variation>A</variation>
    <location>
        <position position="366"/>
    </location>
</feature>
<feature type="mutagenesis site" description="Loss of activity." evidence="2">
    <original>S</original>
    <variation>A</variation>
    <location>
        <position position="409"/>
    </location>
</feature>
<feature type="mutagenesis site" description="Reduced activity." evidence="2">
    <original>G</original>
    <variation>A</variation>
    <location>
        <position position="410"/>
    </location>
</feature>
<feature type="mutagenesis site" description="No effect on activity." evidence="2">
    <original>Y</original>
    <variation>F</variation>
    <location>
        <position position="412"/>
    </location>
</feature>
<feature type="mutagenesis site" description="Reduced activity." evidence="2">
    <original>H</original>
    <variation>A</variation>
    <location>
        <position position="510"/>
    </location>
</feature>
<feature type="mutagenesis site" description="Increased activity." evidence="2">
    <original>D</original>
    <variation>N</variation>
    <location>
        <position position="524"/>
    </location>
</feature>
<feature type="sequence conflict" description="In Ref. 1; AAA24648 and 5; AAA57009." evidence="5" ref="1 5">
    <original>S</original>
    <variation>T</variation>
    <location>
        <position position="378"/>
    </location>
</feature>
<feature type="strand" evidence="6">
    <location>
        <begin position="58"/>
        <end position="61"/>
    </location>
</feature>
<feature type="strand" evidence="6">
    <location>
        <begin position="64"/>
        <end position="69"/>
    </location>
</feature>
<feature type="strand" evidence="6">
    <location>
        <begin position="94"/>
        <end position="96"/>
    </location>
</feature>
<feature type="helix" evidence="6">
    <location>
        <begin position="97"/>
        <end position="109"/>
    </location>
</feature>
<feature type="strand" evidence="6">
    <location>
        <begin position="116"/>
        <end position="119"/>
    </location>
</feature>
<feature type="strand" evidence="6">
    <location>
        <begin position="122"/>
        <end position="125"/>
    </location>
</feature>
<feature type="helix" evidence="6">
    <location>
        <begin position="128"/>
        <end position="143"/>
    </location>
</feature>
<feature type="strand" evidence="6">
    <location>
        <begin position="148"/>
        <end position="153"/>
    </location>
</feature>
<feature type="helix" evidence="6">
    <location>
        <begin position="157"/>
        <end position="163"/>
    </location>
</feature>
<feature type="strand" evidence="6">
    <location>
        <begin position="166"/>
        <end position="171"/>
    </location>
</feature>
<feature type="strand" evidence="6">
    <location>
        <begin position="186"/>
        <end position="188"/>
    </location>
</feature>
<feature type="helix" evidence="6">
    <location>
        <begin position="190"/>
        <end position="195"/>
    </location>
</feature>
<feature type="strand" evidence="6">
    <location>
        <begin position="199"/>
        <end position="205"/>
    </location>
</feature>
<feature type="helix" evidence="6">
    <location>
        <begin position="210"/>
        <end position="212"/>
    </location>
</feature>
<feature type="helix" evidence="6">
    <location>
        <begin position="213"/>
        <end position="216"/>
    </location>
</feature>
<feature type="helix" evidence="6">
    <location>
        <begin position="222"/>
        <end position="247"/>
    </location>
</feature>
<feature type="helix" evidence="6">
    <location>
        <begin position="251"/>
        <end position="254"/>
    </location>
</feature>
<feature type="helix" evidence="6">
    <location>
        <begin position="257"/>
        <end position="266"/>
    </location>
</feature>
<feature type="turn" evidence="6">
    <location>
        <begin position="267"/>
        <end position="270"/>
    </location>
</feature>
<feature type="helix" evidence="6">
    <location>
        <begin position="272"/>
        <end position="278"/>
    </location>
</feature>
<feature type="strand" evidence="6">
    <location>
        <begin position="281"/>
        <end position="285"/>
    </location>
</feature>
<feature type="helix" evidence="6">
    <location>
        <begin position="288"/>
        <end position="299"/>
    </location>
</feature>
<feature type="turn" evidence="6">
    <location>
        <begin position="303"/>
        <end position="305"/>
    </location>
</feature>
<feature type="strand" evidence="6">
    <location>
        <begin position="306"/>
        <end position="312"/>
    </location>
</feature>
<feature type="turn" evidence="6">
    <location>
        <begin position="313"/>
        <end position="315"/>
    </location>
</feature>
<feature type="strand" evidence="6">
    <location>
        <begin position="327"/>
        <end position="342"/>
    </location>
</feature>
<feature type="strand" evidence="6">
    <location>
        <begin position="346"/>
        <end position="348"/>
    </location>
</feature>
<feature type="helix" evidence="6">
    <location>
        <begin position="349"/>
        <end position="361"/>
    </location>
</feature>
<feature type="strand" evidence="6">
    <location>
        <begin position="365"/>
        <end position="377"/>
    </location>
</feature>
<feature type="helix" evidence="6">
    <location>
        <begin position="379"/>
        <end position="394"/>
    </location>
</feature>
<feature type="strand" evidence="6">
    <location>
        <begin position="399"/>
        <end position="408"/>
    </location>
</feature>
<feature type="helix" evidence="6">
    <location>
        <begin position="410"/>
        <end position="413"/>
    </location>
</feature>
<feature type="turn" evidence="6">
    <location>
        <begin position="414"/>
        <end position="417"/>
    </location>
</feature>
<feature type="strand" evidence="6">
    <location>
        <begin position="419"/>
        <end position="423"/>
    </location>
</feature>
<feature type="strand" evidence="6">
    <location>
        <begin position="428"/>
        <end position="430"/>
    </location>
</feature>
<feature type="strand" evidence="6">
    <location>
        <begin position="434"/>
        <end position="440"/>
    </location>
</feature>
<feature type="helix" evidence="6">
    <location>
        <begin position="442"/>
        <end position="447"/>
    </location>
</feature>
<feature type="strand" evidence="6">
    <location>
        <begin position="451"/>
        <end position="453"/>
    </location>
</feature>
<feature type="helix" evidence="6">
    <location>
        <begin position="459"/>
        <end position="461"/>
    </location>
</feature>
<feature type="helix" evidence="6">
    <location>
        <begin position="471"/>
        <end position="495"/>
    </location>
</feature>
<feature type="helix" evidence="6">
    <location>
        <begin position="500"/>
        <end position="504"/>
    </location>
</feature>
<feature type="strand" evidence="6">
    <location>
        <begin position="511"/>
        <end position="513"/>
    </location>
</feature>
<feature type="helix" evidence="6">
    <location>
        <begin position="514"/>
        <end position="519"/>
    </location>
</feature>
<feature type="strand" evidence="6">
    <location>
        <begin position="524"/>
        <end position="526"/>
    </location>
</feature>
<feature type="helix" evidence="6">
    <location>
        <begin position="529"/>
        <end position="539"/>
    </location>
</feature>
<feature type="strand" evidence="6">
    <location>
        <begin position="545"/>
        <end position="548"/>
    </location>
</feature>
<organism>
    <name type="scientific">Escherichia coli (strain K12)</name>
    <dbReference type="NCBI Taxonomy" id="83333"/>
    <lineage>
        <taxon>Bacteria</taxon>
        <taxon>Pseudomonadati</taxon>
        <taxon>Pseudomonadota</taxon>
        <taxon>Gammaproteobacteria</taxon>
        <taxon>Enterobacterales</taxon>
        <taxon>Enterobacteriaceae</taxon>
        <taxon>Escherichia</taxon>
    </lineage>
</organism>
<sequence>MRTLWRFIAGFFKWTWRLLNFVREMVLNLFFIFLVLVGVGIWMQVSGGDSKETASRGALLLDISGVIVDKPDSSQRFSKLSRQLLGASSDRLQENSLFDIVNTIRQAKDDRNITGIVMDLKNFAGGDQPSMQYIGKALKEFRDSGKPVYAVGENYSQGQYYLASFANKIWLSPQGVVDLHGFATNGLYYKSLLDKLKVSTHVFRVGTYKSAVEPFIRDDMSPAAREADSRWIGELWQNYLNTVAANRQIPAEQVFPGAQGLLEGLTKTGGDTAKYALENKLVDALASSAEIEKALTKEFGWSKTDKNYRAISYYDYALKTPADTGDSIGVVFANGAIMDGEETQGNVGGDTTAAQIRDARLDPKVKAIVLRVNSPGGSVTASEVIRAELAAARAAGKPVVVSMGGMAASGGYWISTPANYIVANPSTLTGSIGIFGVITTVENSLDSIGVHTDGVSTSPLADVSITRALPPEAQLMMQLSIENGYKRFITLVADARHSTPEQIDKIAQGHVWTGQDAKANGLVDSLGDFDDAVAKAAELAKVKQWHLEYYVDEPTFFDKVMDNMSGSVRAMLPDAFQAMLPAPLASVASTVKSESDKLAAFNDPQNRYAFCLTCANMR</sequence>
<proteinExistence type="evidence at protein level"/>
<keyword id="KW-0002">3D-structure</keyword>
<keyword id="KW-0997">Cell inner membrane</keyword>
<keyword id="KW-1003">Cell membrane</keyword>
<keyword id="KW-0378">Hydrolase</keyword>
<keyword id="KW-0472">Membrane</keyword>
<keyword id="KW-0645">Protease</keyword>
<keyword id="KW-1185">Reference proteome</keyword>
<keyword id="KW-0720">Serine protease</keyword>
<keyword id="KW-0812">Transmembrane</keyword>
<keyword id="KW-1133">Transmembrane helix</keyword>
<evidence type="ECO:0000269" key="1">
    <source>
    </source>
</evidence>
<evidence type="ECO:0000269" key="2">
    <source>
    </source>
</evidence>
<evidence type="ECO:0000269" key="3">
    <source>
    </source>
</evidence>
<evidence type="ECO:0000269" key="4">
    <source>
    </source>
</evidence>
<evidence type="ECO:0000305" key="5"/>
<evidence type="ECO:0007829" key="6">
    <source>
        <dbReference type="PDB" id="3BF0"/>
    </source>
</evidence>